<feature type="chain" id="PRO_1000017628" description="Large ribosomal subunit protein bL27">
    <location>
        <begin position="1"/>
        <end position="85"/>
    </location>
</feature>
<feature type="region of interest" description="Disordered" evidence="2">
    <location>
        <begin position="1"/>
        <end position="24"/>
    </location>
</feature>
<accession>Q2LR76</accession>
<name>RL27_SYNAS</name>
<reference key="1">
    <citation type="journal article" date="2007" name="Proc. Natl. Acad. Sci. U.S.A.">
        <title>The genome of Syntrophus aciditrophicus: life at the thermodynamic limit of microbial growth.</title>
        <authorList>
            <person name="McInerney M.J."/>
            <person name="Rohlin L."/>
            <person name="Mouttaki H."/>
            <person name="Kim U."/>
            <person name="Krupp R.S."/>
            <person name="Rios-Hernandez L."/>
            <person name="Sieber J."/>
            <person name="Struchtemeyer C.G."/>
            <person name="Bhattacharyya A."/>
            <person name="Campbell J.W."/>
            <person name="Gunsalus R.P."/>
        </authorList>
    </citation>
    <scope>NUCLEOTIDE SEQUENCE [LARGE SCALE GENOMIC DNA]</scope>
    <source>
        <strain>SB</strain>
    </source>
</reference>
<sequence length="85" mass="9285">MAHKKGQGSSRNGRDSNAQRRGVKVYGGQSIHAGSIIIRQLGTKIHPGNNVGMGKDYTLFSLIDGVVKFERLDKKRKKVSVYATA</sequence>
<keyword id="KW-1185">Reference proteome</keyword>
<keyword id="KW-0687">Ribonucleoprotein</keyword>
<keyword id="KW-0689">Ribosomal protein</keyword>
<dbReference type="EMBL" id="CP000252">
    <property type="protein sequence ID" value="ABC76588.1"/>
    <property type="molecule type" value="Genomic_DNA"/>
</dbReference>
<dbReference type="RefSeq" id="WP_011416622.1">
    <property type="nucleotide sequence ID" value="NC_007759.1"/>
</dbReference>
<dbReference type="SMR" id="Q2LR76"/>
<dbReference type="FunCoup" id="Q2LR76">
    <property type="interactions" value="525"/>
</dbReference>
<dbReference type="STRING" id="56780.SYN_01352"/>
<dbReference type="KEGG" id="sat:SYN_01352"/>
<dbReference type="eggNOG" id="COG0211">
    <property type="taxonomic scope" value="Bacteria"/>
</dbReference>
<dbReference type="HOGENOM" id="CLU_095424_4_0_7"/>
<dbReference type="InParanoid" id="Q2LR76"/>
<dbReference type="OrthoDB" id="9803474at2"/>
<dbReference type="Proteomes" id="UP000001933">
    <property type="component" value="Chromosome"/>
</dbReference>
<dbReference type="GO" id="GO:1990904">
    <property type="term" value="C:ribonucleoprotein complex"/>
    <property type="evidence" value="ECO:0007669"/>
    <property type="project" value="UniProtKB-KW"/>
</dbReference>
<dbReference type="GO" id="GO:0005840">
    <property type="term" value="C:ribosome"/>
    <property type="evidence" value="ECO:0007669"/>
    <property type="project" value="UniProtKB-KW"/>
</dbReference>
<dbReference type="GO" id="GO:0003735">
    <property type="term" value="F:structural constituent of ribosome"/>
    <property type="evidence" value="ECO:0007669"/>
    <property type="project" value="InterPro"/>
</dbReference>
<dbReference type="GO" id="GO:0006412">
    <property type="term" value="P:translation"/>
    <property type="evidence" value="ECO:0007669"/>
    <property type="project" value="UniProtKB-UniRule"/>
</dbReference>
<dbReference type="FunFam" id="2.40.50.100:FF:000004">
    <property type="entry name" value="50S ribosomal protein L27"/>
    <property type="match status" value="1"/>
</dbReference>
<dbReference type="Gene3D" id="2.40.50.100">
    <property type="match status" value="1"/>
</dbReference>
<dbReference type="HAMAP" id="MF_00539">
    <property type="entry name" value="Ribosomal_bL27"/>
    <property type="match status" value="1"/>
</dbReference>
<dbReference type="InterPro" id="IPR001684">
    <property type="entry name" value="Ribosomal_bL27"/>
</dbReference>
<dbReference type="NCBIfam" id="TIGR00062">
    <property type="entry name" value="L27"/>
    <property type="match status" value="1"/>
</dbReference>
<dbReference type="PANTHER" id="PTHR15893:SF0">
    <property type="entry name" value="LARGE RIBOSOMAL SUBUNIT PROTEIN BL27M"/>
    <property type="match status" value="1"/>
</dbReference>
<dbReference type="PANTHER" id="PTHR15893">
    <property type="entry name" value="RIBOSOMAL PROTEIN L27"/>
    <property type="match status" value="1"/>
</dbReference>
<dbReference type="Pfam" id="PF01016">
    <property type="entry name" value="Ribosomal_L27"/>
    <property type="match status" value="1"/>
</dbReference>
<dbReference type="PRINTS" id="PR00063">
    <property type="entry name" value="RIBOSOMALL27"/>
</dbReference>
<dbReference type="SUPFAM" id="SSF110324">
    <property type="entry name" value="Ribosomal L27 protein-like"/>
    <property type="match status" value="1"/>
</dbReference>
<proteinExistence type="inferred from homology"/>
<protein>
    <recommendedName>
        <fullName evidence="1">Large ribosomal subunit protein bL27</fullName>
    </recommendedName>
    <alternativeName>
        <fullName evidence="3">50S ribosomal protein L27</fullName>
    </alternativeName>
</protein>
<evidence type="ECO:0000255" key="1">
    <source>
        <dbReference type="HAMAP-Rule" id="MF_00539"/>
    </source>
</evidence>
<evidence type="ECO:0000256" key="2">
    <source>
        <dbReference type="SAM" id="MobiDB-lite"/>
    </source>
</evidence>
<evidence type="ECO:0000305" key="3"/>
<organism>
    <name type="scientific">Syntrophus aciditrophicus (strain SB)</name>
    <dbReference type="NCBI Taxonomy" id="56780"/>
    <lineage>
        <taxon>Bacteria</taxon>
        <taxon>Pseudomonadati</taxon>
        <taxon>Thermodesulfobacteriota</taxon>
        <taxon>Syntrophia</taxon>
        <taxon>Syntrophales</taxon>
        <taxon>Syntrophaceae</taxon>
        <taxon>Syntrophus</taxon>
    </lineage>
</organism>
<comment type="similarity">
    <text evidence="1">Belongs to the bacterial ribosomal protein bL27 family.</text>
</comment>
<gene>
    <name evidence="1" type="primary">rpmA</name>
    <name type="ordered locus">SYNAS_07090</name>
    <name type="ORF">SYN_01352</name>
</gene>